<proteinExistence type="inferred from homology"/>
<name>BRRF2_EBVG</name>
<reference key="1">
    <citation type="journal article" date="2005" name="J. Virol.">
        <title>Genomic sequence analysis of Epstein-Barr virus strain GD1 from a nasopharyngeal carcinoma patient.</title>
        <authorList>
            <person name="Zeng M.-S."/>
            <person name="Li D.-J."/>
            <person name="Liu Q.-L."/>
            <person name="Song L.-B."/>
            <person name="Li M.-Z."/>
            <person name="Zhang R.-H."/>
            <person name="Yu X.-J."/>
            <person name="Wang H.-M."/>
            <person name="Ernberg I."/>
            <person name="Zeng Y.-X."/>
        </authorList>
    </citation>
    <scope>NUCLEOTIDE SEQUENCE [LARGE SCALE GENOMIC DNA]</scope>
</reference>
<feature type="chain" id="PRO_0000382442" description="Tegument protein BRRF2">
    <location>
        <begin position="1"/>
        <end position="537"/>
    </location>
</feature>
<feature type="region of interest" description="Disordered" evidence="1">
    <location>
        <begin position="322"/>
        <end position="466"/>
    </location>
</feature>
<feature type="region of interest" description="Disordered" evidence="1">
    <location>
        <begin position="486"/>
        <end position="537"/>
    </location>
</feature>
<feature type="compositionally biased region" description="Polar residues" evidence="1">
    <location>
        <begin position="334"/>
        <end position="347"/>
    </location>
</feature>
<feature type="compositionally biased region" description="Low complexity" evidence="1">
    <location>
        <begin position="420"/>
        <end position="441"/>
    </location>
</feature>
<feature type="compositionally biased region" description="Acidic residues" evidence="1">
    <location>
        <begin position="492"/>
        <end position="517"/>
    </location>
</feature>
<organismHost>
    <name type="scientific">Homo sapiens</name>
    <name type="common">Human</name>
    <dbReference type="NCBI Taxonomy" id="9606"/>
</organismHost>
<comment type="subcellular location">
    <subcellularLocation>
        <location evidence="2">Virion tegument</location>
    </subcellularLocation>
</comment>
<comment type="similarity">
    <text evidence="2">Belongs to the lymphocryptovirus BRRF2 family.</text>
</comment>
<sequence length="537" mass="56876">MSGQQRGSVILVPEHLAGALTKLMSDFITGQDVTLSGGNIAVKIRDAINQTPGGGDVAILSSLFALWNALPTSGRQSSRDDLIPAAVQALTTAHNLCLGVIPGETSHKDTPESLLRAIVTGLQKLWVDSCGCPECLQCLKGLKAIKPGLYEIPRIIPHTKQCSPVNLLNMLVHKLVALRGHVQLAYDARVLTPDFHEIPDLDDSDAVFARTLLAALFHLNMFFILKDYITQDSMSLKQALSGHWMSATGNPLPAAPETLRNYLEAFRNSDNHFYLPTTGPLNTFKFPEELLGRVVVIDSSLCAASHVQDVITRGVGAGVPRPRFLALPPAPSREPQQTCSQLTSRGNESSRRNLGQPGGTSPAVPPVCPIVSLAASRAKQNRGGTGSLHLAQPEGTSPAVSPVCPIASPAASRSKQHCGVTGSSQAAPSSSSVTPVASLSGDLEEEEEGSRESPSPPSSKKGAEEFEAWLEAQDANLEDVQREFSGLRVIGDEDEDGSEDGEFSDLDLSDSDHEGDEGGGAVGGGRSLHSLYSLSVV</sequence>
<accession>Q3KSS5</accession>
<keyword id="KW-0946">Virion</keyword>
<keyword id="KW-0920">Virion tegument</keyword>
<evidence type="ECO:0000256" key="1">
    <source>
        <dbReference type="SAM" id="MobiDB-lite"/>
    </source>
</evidence>
<evidence type="ECO:0000305" key="2"/>
<dbReference type="EMBL" id="AY961628">
    <property type="protein sequence ID" value="AAY41124.1"/>
    <property type="molecule type" value="Genomic_DNA"/>
</dbReference>
<dbReference type="IntAct" id="Q3KSS5">
    <property type="interactions" value="1"/>
</dbReference>
<dbReference type="Proteomes" id="UP000007641">
    <property type="component" value="Genome"/>
</dbReference>
<dbReference type="GO" id="GO:0019033">
    <property type="term" value="C:viral tegument"/>
    <property type="evidence" value="ECO:0007669"/>
    <property type="project" value="UniProtKB-SubCell"/>
</dbReference>
<dbReference type="InterPro" id="IPR008550">
    <property type="entry name" value="Herpesvirus_BRRF2-like"/>
</dbReference>
<dbReference type="Pfam" id="PF05734">
    <property type="entry name" value="DUF832"/>
    <property type="match status" value="1"/>
</dbReference>
<protein>
    <recommendedName>
        <fullName>Tegument protein BRRF2</fullName>
    </recommendedName>
</protein>
<gene>
    <name type="ORF">BRRF2</name>
</gene>
<organism>
    <name type="scientific">Epstein-Barr virus (strain GD1)</name>
    <name type="common">HHV-4</name>
    <name type="synonym">Human gammaherpesvirus 4</name>
    <dbReference type="NCBI Taxonomy" id="10376"/>
    <lineage>
        <taxon>Viruses</taxon>
        <taxon>Duplodnaviria</taxon>
        <taxon>Heunggongvirae</taxon>
        <taxon>Peploviricota</taxon>
        <taxon>Herviviricetes</taxon>
        <taxon>Herpesvirales</taxon>
        <taxon>Orthoherpesviridae</taxon>
        <taxon>Gammaherpesvirinae</taxon>
        <taxon>Lymphocryptovirus</taxon>
        <taxon>Lymphocryptovirus humangamma4</taxon>
    </lineage>
</organism>